<sequence length="281" mass="30969">MVLTHNVLAVTFGVLGNIISFIVFLAPVPTFVRICKKKSIEGFESLPYVSALFSAMLWIYYALQKDGAGFLLITINAVGCFIETIYIILFITYANKKARISTLKVLGLLNFLGFAAIILVCELLTKGSNREKVLGGICVGFSVCVFAAPLSIMRVVIRTKSVEFMPFSLSLFLTISAITWLFYGLAIKDFYVALPNILGAFLGAVQMILYVIFKYYKTPLVVDETEKPKTVSDHSINMVKLSSTPASGDLTVQPQTNPDVSHPIKTHGGDLEDQMDKKMPN</sequence>
<reference key="1">
    <citation type="journal article" date="1999" name="Nature">
        <title>Sequence and analysis of chromosome 4 of the plant Arabidopsis thaliana.</title>
        <authorList>
            <person name="Mayer K.F.X."/>
            <person name="Schueller C."/>
            <person name="Wambutt R."/>
            <person name="Murphy G."/>
            <person name="Volckaert G."/>
            <person name="Pohl T."/>
            <person name="Duesterhoeft A."/>
            <person name="Stiekema W."/>
            <person name="Entian K.-D."/>
            <person name="Terryn N."/>
            <person name="Harris B."/>
            <person name="Ansorge W."/>
            <person name="Brandt P."/>
            <person name="Grivell L.A."/>
            <person name="Rieger M."/>
            <person name="Weichselgartner M."/>
            <person name="de Simone V."/>
            <person name="Obermaier B."/>
            <person name="Mache R."/>
            <person name="Mueller M."/>
            <person name="Kreis M."/>
            <person name="Delseny M."/>
            <person name="Puigdomenech P."/>
            <person name="Watson M."/>
            <person name="Schmidtheini T."/>
            <person name="Reichert B."/>
            <person name="Portetelle D."/>
            <person name="Perez-Alonso M."/>
            <person name="Boutry M."/>
            <person name="Bancroft I."/>
            <person name="Vos P."/>
            <person name="Hoheisel J."/>
            <person name="Zimmermann W."/>
            <person name="Wedler H."/>
            <person name="Ridley P."/>
            <person name="Langham S.-A."/>
            <person name="McCullagh B."/>
            <person name="Bilham L."/>
            <person name="Robben J."/>
            <person name="van der Schueren J."/>
            <person name="Grymonprez B."/>
            <person name="Chuang Y.-J."/>
            <person name="Vandenbussche F."/>
            <person name="Braeken M."/>
            <person name="Weltjens I."/>
            <person name="Voet M."/>
            <person name="Bastiaens I."/>
            <person name="Aert R."/>
            <person name="Defoor E."/>
            <person name="Weitzenegger T."/>
            <person name="Bothe G."/>
            <person name="Ramsperger U."/>
            <person name="Hilbert H."/>
            <person name="Braun M."/>
            <person name="Holzer E."/>
            <person name="Brandt A."/>
            <person name="Peters S."/>
            <person name="van Staveren M."/>
            <person name="Dirkse W."/>
            <person name="Mooijman P."/>
            <person name="Klein Lankhorst R."/>
            <person name="Rose M."/>
            <person name="Hauf J."/>
            <person name="Koetter P."/>
            <person name="Berneiser S."/>
            <person name="Hempel S."/>
            <person name="Feldpausch M."/>
            <person name="Lamberth S."/>
            <person name="Van den Daele H."/>
            <person name="De Keyser A."/>
            <person name="Buysshaert C."/>
            <person name="Gielen J."/>
            <person name="Villarroel R."/>
            <person name="De Clercq R."/>
            <person name="van Montagu M."/>
            <person name="Rogers J."/>
            <person name="Cronin A."/>
            <person name="Quail M.A."/>
            <person name="Bray-Allen S."/>
            <person name="Clark L."/>
            <person name="Doggett J."/>
            <person name="Hall S."/>
            <person name="Kay M."/>
            <person name="Lennard N."/>
            <person name="McLay K."/>
            <person name="Mayes R."/>
            <person name="Pettett A."/>
            <person name="Rajandream M.A."/>
            <person name="Lyne M."/>
            <person name="Benes V."/>
            <person name="Rechmann S."/>
            <person name="Borkova D."/>
            <person name="Bloecker H."/>
            <person name="Scharfe M."/>
            <person name="Grimm M."/>
            <person name="Loehnert T.-H."/>
            <person name="Dose S."/>
            <person name="de Haan M."/>
            <person name="Maarse A.C."/>
            <person name="Schaefer M."/>
            <person name="Mueller-Auer S."/>
            <person name="Gabel C."/>
            <person name="Fuchs M."/>
            <person name="Fartmann B."/>
            <person name="Granderath K."/>
            <person name="Dauner D."/>
            <person name="Herzl A."/>
            <person name="Neumann S."/>
            <person name="Argiriou A."/>
            <person name="Vitale D."/>
            <person name="Liguori R."/>
            <person name="Piravandi E."/>
            <person name="Massenet O."/>
            <person name="Quigley F."/>
            <person name="Clabauld G."/>
            <person name="Muendlein A."/>
            <person name="Felber R."/>
            <person name="Schnabl S."/>
            <person name="Hiller R."/>
            <person name="Schmidt W."/>
            <person name="Lecharny A."/>
            <person name="Aubourg S."/>
            <person name="Chefdor F."/>
            <person name="Cooke R."/>
            <person name="Berger C."/>
            <person name="Monfort A."/>
            <person name="Casacuberta E."/>
            <person name="Gibbons T."/>
            <person name="Weber N."/>
            <person name="Vandenbol M."/>
            <person name="Bargues M."/>
            <person name="Terol J."/>
            <person name="Torres A."/>
            <person name="Perez-Perez A."/>
            <person name="Purnelle B."/>
            <person name="Bent E."/>
            <person name="Johnson S."/>
            <person name="Tacon D."/>
            <person name="Jesse T."/>
            <person name="Heijnen L."/>
            <person name="Schwarz S."/>
            <person name="Scholler P."/>
            <person name="Heber S."/>
            <person name="Francs P."/>
            <person name="Bielke C."/>
            <person name="Frishman D."/>
            <person name="Haase D."/>
            <person name="Lemcke K."/>
            <person name="Mewes H.-W."/>
            <person name="Stocker S."/>
            <person name="Zaccaria P."/>
            <person name="Bevan M."/>
            <person name="Wilson R.K."/>
            <person name="de la Bastide M."/>
            <person name="Habermann K."/>
            <person name="Parnell L."/>
            <person name="Dedhia N."/>
            <person name="Gnoj L."/>
            <person name="Schutz K."/>
            <person name="Huang E."/>
            <person name="Spiegel L."/>
            <person name="Sekhon M."/>
            <person name="Murray J."/>
            <person name="Sheet P."/>
            <person name="Cordes M."/>
            <person name="Abu-Threideh J."/>
            <person name="Stoneking T."/>
            <person name="Kalicki J."/>
            <person name="Graves T."/>
            <person name="Harmon G."/>
            <person name="Edwards J."/>
            <person name="Latreille P."/>
            <person name="Courtney L."/>
            <person name="Cloud J."/>
            <person name="Abbott A."/>
            <person name="Scott K."/>
            <person name="Johnson D."/>
            <person name="Minx P."/>
            <person name="Bentley D."/>
            <person name="Fulton B."/>
            <person name="Miller N."/>
            <person name="Greco T."/>
            <person name="Kemp K."/>
            <person name="Kramer J."/>
            <person name="Fulton L."/>
            <person name="Mardis E."/>
            <person name="Dante M."/>
            <person name="Pepin K."/>
            <person name="Hillier L.W."/>
            <person name="Nelson J."/>
            <person name="Spieth J."/>
            <person name="Ryan E."/>
            <person name="Andrews S."/>
            <person name="Geisel C."/>
            <person name="Layman D."/>
            <person name="Du H."/>
            <person name="Ali J."/>
            <person name="Berghoff A."/>
            <person name="Jones K."/>
            <person name="Drone K."/>
            <person name="Cotton M."/>
            <person name="Joshu C."/>
            <person name="Antonoiu B."/>
            <person name="Zidanic M."/>
            <person name="Strong C."/>
            <person name="Sun H."/>
            <person name="Lamar B."/>
            <person name="Yordan C."/>
            <person name="Ma P."/>
            <person name="Zhong J."/>
            <person name="Preston R."/>
            <person name="Vil D."/>
            <person name="Shekher M."/>
            <person name="Matero A."/>
            <person name="Shah R."/>
            <person name="Swaby I.K."/>
            <person name="O'Shaughnessy A."/>
            <person name="Rodriguez M."/>
            <person name="Hoffman J."/>
            <person name="Till S."/>
            <person name="Granat S."/>
            <person name="Shohdy N."/>
            <person name="Hasegawa A."/>
            <person name="Hameed A."/>
            <person name="Lodhi M."/>
            <person name="Johnson A."/>
            <person name="Chen E."/>
            <person name="Marra M.A."/>
            <person name="Martienssen R."/>
            <person name="McCombie W.R."/>
        </authorList>
    </citation>
    <scope>NUCLEOTIDE SEQUENCE [LARGE SCALE GENOMIC DNA]</scope>
    <source>
        <strain>cv. Columbia</strain>
    </source>
</reference>
<reference key="2">
    <citation type="journal article" date="2017" name="Plant J.">
        <title>Araport11: a complete reannotation of the Arabidopsis thaliana reference genome.</title>
        <authorList>
            <person name="Cheng C.Y."/>
            <person name="Krishnakumar V."/>
            <person name="Chan A.P."/>
            <person name="Thibaud-Nissen F."/>
            <person name="Schobel S."/>
            <person name="Town C.D."/>
        </authorList>
    </citation>
    <scope>GENOME REANNOTATION</scope>
    <source>
        <strain>cv. Columbia</strain>
    </source>
</reference>
<reference key="3">
    <citation type="journal article" date="2010" name="Nature">
        <title>Sugar transporters for intercellular exchange and nutrition of pathogens.</title>
        <authorList>
            <person name="Chen L.-Q."/>
            <person name="Hou B.-H."/>
            <person name="Lalonde S."/>
            <person name="Takanaga H."/>
            <person name="Hartung M.L."/>
            <person name="Qu X.-Q."/>
            <person name="Guo W.-J."/>
            <person name="Kim J.-G."/>
            <person name="Underwood W."/>
            <person name="Chaudhuri B."/>
            <person name="Chermak D."/>
            <person name="Antony G."/>
            <person name="White F.F."/>
            <person name="Somerville S.C."/>
            <person name="Mudgett M.B."/>
            <person name="Frommer W.B."/>
        </authorList>
    </citation>
    <scope>GENE FAMILY</scope>
    <scope>NOMENCLATURE</scope>
    <source>
        <strain>cv. Columbia</strain>
    </source>
</reference>
<reference key="4">
    <citation type="journal article" date="2012" name="Science">
        <title>Sucrose efflux mediated by SWEET proteins as a key step for phloem transport.</title>
        <authorList>
            <person name="Chen L.-Q."/>
            <person name="Qu X.-Q."/>
            <person name="Hou B.-H."/>
            <person name="Sosso D."/>
            <person name="Osorio S."/>
            <person name="Fernie A.R."/>
            <person name="Frommer W.B."/>
        </authorList>
    </citation>
    <scope>FUNCTION</scope>
</reference>
<protein>
    <recommendedName>
        <fullName evidence="6">Bidirectional sugar transporter SWEET14</fullName>
        <shortName evidence="6">AtSWEET14</shortName>
    </recommendedName>
    <alternativeName>
        <fullName evidence="6">Protein SUGARS WILL EVENTUALLY BE EXPORTED TRANSPORTERS 14</fullName>
    </alternativeName>
</protein>
<name>SWT14_ARATH</name>
<proteinExistence type="inferred from homology"/>
<keyword id="KW-1003">Cell membrane</keyword>
<keyword id="KW-0472">Membrane</keyword>
<keyword id="KW-1185">Reference proteome</keyword>
<keyword id="KW-0677">Repeat</keyword>
<keyword id="KW-0762">Sugar transport</keyword>
<keyword id="KW-0812">Transmembrane</keyword>
<keyword id="KW-1133">Transmembrane helix</keyword>
<keyword id="KW-0813">Transport</keyword>
<comment type="function">
    <text evidence="5">Mediates both low-affinity uptake and efflux of sugar across the plasma membrane.</text>
</comment>
<comment type="subunit">
    <text evidence="2">Forms homooligomers and/or heterooligomers.</text>
</comment>
<comment type="subcellular location">
    <subcellularLocation>
        <location evidence="1">Cell membrane</location>
        <topology evidence="1">Multi-pass membrane protein</topology>
    </subcellularLocation>
</comment>
<comment type="similarity">
    <text evidence="7">Belongs to the SWEET sugar transporter family.</text>
</comment>
<evidence type="ECO:0000250" key="1"/>
<evidence type="ECO:0000250" key="2">
    <source>
        <dbReference type="UniProtKB" id="Q8L9J7"/>
    </source>
</evidence>
<evidence type="ECO:0000255" key="3"/>
<evidence type="ECO:0000256" key="4">
    <source>
        <dbReference type="SAM" id="MobiDB-lite"/>
    </source>
</evidence>
<evidence type="ECO:0000269" key="5">
    <source>
    </source>
</evidence>
<evidence type="ECO:0000303" key="6">
    <source>
    </source>
</evidence>
<evidence type="ECO:0000305" key="7"/>
<gene>
    <name evidence="6" type="primary">SWEET14</name>
    <name type="ordered locus">At4g25010</name>
    <name type="ORF">F13M23.150</name>
</gene>
<accession>Q9SW25</accession>
<dbReference type="EMBL" id="AL035523">
    <property type="protein sequence ID" value="CAB36743.1"/>
    <property type="molecule type" value="Genomic_DNA"/>
</dbReference>
<dbReference type="EMBL" id="AL161562">
    <property type="protein sequence ID" value="CAB79410.1"/>
    <property type="molecule type" value="Genomic_DNA"/>
</dbReference>
<dbReference type="EMBL" id="CP002687">
    <property type="protein sequence ID" value="AEE84991.1"/>
    <property type="molecule type" value="Genomic_DNA"/>
</dbReference>
<dbReference type="PIR" id="T05522">
    <property type="entry name" value="T05522"/>
</dbReference>
<dbReference type="RefSeq" id="NP_194231.1">
    <property type="nucleotide sequence ID" value="NM_118633.2"/>
</dbReference>
<dbReference type="SMR" id="Q9SW25"/>
<dbReference type="FunCoup" id="Q9SW25">
    <property type="interactions" value="725"/>
</dbReference>
<dbReference type="STRING" id="3702.Q9SW25"/>
<dbReference type="PaxDb" id="3702-AT4G25010.1"/>
<dbReference type="ProteomicsDB" id="226781"/>
<dbReference type="EnsemblPlants" id="AT4G25010.1">
    <property type="protein sequence ID" value="AT4G25010.1"/>
    <property type="gene ID" value="AT4G25010"/>
</dbReference>
<dbReference type="GeneID" id="828604"/>
<dbReference type="Gramene" id="AT4G25010.1">
    <property type="protein sequence ID" value="AT4G25010.1"/>
    <property type="gene ID" value="AT4G25010"/>
</dbReference>
<dbReference type="KEGG" id="ath:AT4G25010"/>
<dbReference type="Araport" id="AT4G25010"/>
<dbReference type="TAIR" id="AT4G25010">
    <property type="gene designation" value="SWEET14"/>
</dbReference>
<dbReference type="eggNOG" id="KOG1623">
    <property type="taxonomic scope" value="Eukaryota"/>
</dbReference>
<dbReference type="HOGENOM" id="CLU_048643_4_2_1"/>
<dbReference type="InParanoid" id="Q9SW25"/>
<dbReference type="OMA" id="INLWMYG"/>
<dbReference type="PhylomeDB" id="Q9SW25"/>
<dbReference type="PRO" id="PR:Q9SW25"/>
<dbReference type="Proteomes" id="UP000006548">
    <property type="component" value="Chromosome 4"/>
</dbReference>
<dbReference type="ExpressionAtlas" id="Q9SW25">
    <property type="expression patterns" value="baseline and differential"/>
</dbReference>
<dbReference type="GO" id="GO:0005886">
    <property type="term" value="C:plasma membrane"/>
    <property type="evidence" value="ECO:0000314"/>
    <property type="project" value="TAIR"/>
</dbReference>
<dbReference type="GO" id="GO:1905201">
    <property type="term" value="F:gibberellin transmembrane transporter activity"/>
    <property type="evidence" value="ECO:0000314"/>
    <property type="project" value="TAIR"/>
</dbReference>
<dbReference type="GO" id="GO:0008515">
    <property type="term" value="F:sucrose transmembrane transporter activity"/>
    <property type="evidence" value="ECO:0000314"/>
    <property type="project" value="TAIR"/>
</dbReference>
<dbReference type="GO" id="GO:0051119">
    <property type="term" value="F:sugar transmembrane transporter activity"/>
    <property type="evidence" value="ECO:0000250"/>
    <property type="project" value="UniProtKB"/>
</dbReference>
<dbReference type="GO" id="GO:0009901">
    <property type="term" value="P:anther dehiscence"/>
    <property type="evidence" value="ECO:0000316"/>
    <property type="project" value="TAIR"/>
</dbReference>
<dbReference type="GO" id="GO:1905200">
    <property type="term" value="P:gibberellic acid transmembrane transport"/>
    <property type="evidence" value="ECO:0000314"/>
    <property type="project" value="TAIR"/>
</dbReference>
<dbReference type="GO" id="GO:0080112">
    <property type="term" value="P:seed growth"/>
    <property type="evidence" value="ECO:0000316"/>
    <property type="project" value="TAIR"/>
</dbReference>
<dbReference type="GO" id="GO:0015770">
    <property type="term" value="P:sucrose transport"/>
    <property type="evidence" value="ECO:0000314"/>
    <property type="project" value="TAIR"/>
</dbReference>
<dbReference type="FunFam" id="1.20.1280.290:FF:000001">
    <property type="entry name" value="Bidirectional sugar transporter SWEET"/>
    <property type="match status" value="1"/>
</dbReference>
<dbReference type="FunFam" id="1.20.1280.290:FF:000003">
    <property type="entry name" value="Bidirectional sugar transporter SWEET"/>
    <property type="match status" value="1"/>
</dbReference>
<dbReference type="Gene3D" id="1.20.1280.290">
    <property type="match status" value="2"/>
</dbReference>
<dbReference type="InterPro" id="IPR047664">
    <property type="entry name" value="SWEET"/>
</dbReference>
<dbReference type="InterPro" id="IPR004316">
    <property type="entry name" value="SWEET_rpt"/>
</dbReference>
<dbReference type="PANTHER" id="PTHR10791:SF122">
    <property type="entry name" value="BIDIRECTIONAL SUGAR TRANSPORTER SWEET14"/>
    <property type="match status" value="1"/>
</dbReference>
<dbReference type="PANTHER" id="PTHR10791">
    <property type="entry name" value="RAG1-ACTIVATING PROTEIN 1"/>
    <property type="match status" value="1"/>
</dbReference>
<dbReference type="Pfam" id="PF03083">
    <property type="entry name" value="MtN3_slv"/>
    <property type="match status" value="2"/>
</dbReference>
<feature type="chain" id="PRO_0000404114" description="Bidirectional sugar transporter SWEET14">
    <location>
        <begin position="1"/>
        <end position="281"/>
    </location>
</feature>
<feature type="topological domain" description="Extracellular" evidence="3">
    <location>
        <begin position="1"/>
        <end position="6"/>
    </location>
</feature>
<feature type="transmembrane region" description="Helical; Name=1" evidence="3">
    <location>
        <begin position="7"/>
        <end position="27"/>
    </location>
</feature>
<feature type="topological domain" description="Cytoplasmic" evidence="3">
    <location>
        <begin position="28"/>
        <end position="42"/>
    </location>
</feature>
<feature type="transmembrane region" description="Helical; Name=2" evidence="3">
    <location>
        <begin position="43"/>
        <end position="63"/>
    </location>
</feature>
<feature type="topological domain" description="Extracellular" evidence="3">
    <location>
        <begin position="64"/>
        <end position="70"/>
    </location>
</feature>
<feature type="transmembrane region" description="Helical; Name=3" evidence="3">
    <location>
        <begin position="71"/>
        <end position="91"/>
    </location>
</feature>
<feature type="topological domain" description="Cytoplasmic" evidence="3">
    <location>
        <begin position="92"/>
        <end position="104"/>
    </location>
</feature>
<feature type="transmembrane region" description="Helical; Name=4" evidence="3">
    <location>
        <begin position="105"/>
        <end position="125"/>
    </location>
</feature>
<feature type="topological domain" description="Extracellular" evidence="3">
    <location>
        <begin position="126"/>
        <end position="132"/>
    </location>
</feature>
<feature type="transmembrane region" description="Helical; Name=5" evidence="3">
    <location>
        <begin position="133"/>
        <end position="153"/>
    </location>
</feature>
<feature type="topological domain" description="Cytoplasmic" evidence="3">
    <location>
        <begin position="154"/>
        <end position="166"/>
    </location>
</feature>
<feature type="transmembrane region" description="Helical; Name=6" evidence="3">
    <location>
        <begin position="167"/>
        <end position="187"/>
    </location>
</feature>
<feature type="topological domain" description="Extracellular" evidence="3">
    <location>
        <begin position="188"/>
        <end position="192"/>
    </location>
</feature>
<feature type="transmembrane region" description="Helical; Name=7" evidence="3">
    <location>
        <begin position="193"/>
        <end position="213"/>
    </location>
</feature>
<feature type="topological domain" description="Cytoplasmic" evidence="3">
    <location>
        <begin position="214"/>
        <end position="281"/>
    </location>
</feature>
<feature type="domain" description="MtN3/slv 1">
    <location>
        <begin position="11"/>
        <end position="97"/>
    </location>
</feature>
<feature type="domain" description="MtN3/slv 2">
    <location>
        <begin position="133"/>
        <end position="216"/>
    </location>
</feature>
<feature type="region of interest" description="Disordered" evidence="4">
    <location>
        <begin position="244"/>
        <end position="281"/>
    </location>
</feature>
<feature type="compositionally biased region" description="Polar residues" evidence="4">
    <location>
        <begin position="244"/>
        <end position="259"/>
    </location>
</feature>
<feature type="compositionally biased region" description="Basic and acidic residues" evidence="4">
    <location>
        <begin position="267"/>
        <end position="281"/>
    </location>
</feature>
<organism>
    <name type="scientific">Arabidopsis thaliana</name>
    <name type="common">Mouse-ear cress</name>
    <dbReference type="NCBI Taxonomy" id="3702"/>
    <lineage>
        <taxon>Eukaryota</taxon>
        <taxon>Viridiplantae</taxon>
        <taxon>Streptophyta</taxon>
        <taxon>Embryophyta</taxon>
        <taxon>Tracheophyta</taxon>
        <taxon>Spermatophyta</taxon>
        <taxon>Magnoliopsida</taxon>
        <taxon>eudicotyledons</taxon>
        <taxon>Gunneridae</taxon>
        <taxon>Pentapetalae</taxon>
        <taxon>rosids</taxon>
        <taxon>malvids</taxon>
        <taxon>Brassicales</taxon>
        <taxon>Brassicaceae</taxon>
        <taxon>Camelineae</taxon>
        <taxon>Arabidopsis</taxon>
    </lineage>
</organism>